<reference key="1">
    <citation type="journal article" date="2009" name="J. Bacteriol.">
        <title>Complete genome sequence of Macrococcus caseolyticus strain JCSCS5402, reflecting the ancestral genome of the human-pathogenic staphylococci.</title>
        <authorList>
            <person name="Baba T."/>
            <person name="Kuwahara-Arai K."/>
            <person name="Uchiyama I."/>
            <person name="Takeuchi F."/>
            <person name="Ito T."/>
            <person name="Hiramatsu K."/>
        </authorList>
    </citation>
    <scope>NUCLEOTIDE SEQUENCE [LARGE SCALE GENOMIC DNA]</scope>
    <source>
        <strain>JCSC5402</strain>
    </source>
</reference>
<proteinExistence type="inferred from homology"/>
<sequence length="396" mass="42593">MVKKVVSDLELKDKKVLVRADFNVPMKDGNITNDNRIVEALPTIKYIIEQGGKVILFSHLGKVKTEEDKANLSLQPVANRLSELLDKEVQFVAETRGEKLESAINALQPGDVLLFENTRFEDVDGKKESKNDAELGKYWASLGDVFVNDAFGTAHREHASNVGVATHLDTAAGFLMEKEIKFIGGVVENPERPFVAILGGAKVSDKIGVIENLLEVADKVLIGGGMAYTFLKAQGKEIGHSLLEEDKIDLAKDLMERGKDKLVLPIDAKVTKEFSNDGEIEAVAIDHIPADLQSLDIGPKTVELFGKELEGAKTVVWNGPMGVFEMSNFAKGTVGVCKAIAELKGATTIIGGGDSAAAAMDLGFADKFTHISTGGGASLEYLEGKELPGIKSISDK</sequence>
<accession>B9EAG8</accession>
<evidence type="ECO:0000255" key="1">
    <source>
        <dbReference type="HAMAP-Rule" id="MF_00145"/>
    </source>
</evidence>
<gene>
    <name evidence="1" type="primary">pgk</name>
    <name type="ordered locus">MCCL_0522</name>
</gene>
<comment type="catalytic activity">
    <reaction evidence="1">
        <text>(2R)-3-phosphoglycerate + ATP = (2R)-3-phospho-glyceroyl phosphate + ADP</text>
        <dbReference type="Rhea" id="RHEA:14801"/>
        <dbReference type="ChEBI" id="CHEBI:30616"/>
        <dbReference type="ChEBI" id="CHEBI:57604"/>
        <dbReference type="ChEBI" id="CHEBI:58272"/>
        <dbReference type="ChEBI" id="CHEBI:456216"/>
        <dbReference type="EC" id="2.7.2.3"/>
    </reaction>
</comment>
<comment type="pathway">
    <text evidence="1">Carbohydrate degradation; glycolysis; pyruvate from D-glyceraldehyde 3-phosphate: step 2/5.</text>
</comment>
<comment type="subunit">
    <text evidence="1">Monomer.</text>
</comment>
<comment type="subcellular location">
    <subcellularLocation>
        <location evidence="1">Cytoplasm</location>
    </subcellularLocation>
</comment>
<comment type="similarity">
    <text evidence="1">Belongs to the phosphoglycerate kinase family.</text>
</comment>
<feature type="chain" id="PRO_1000192837" description="Phosphoglycerate kinase">
    <location>
        <begin position="1"/>
        <end position="396"/>
    </location>
</feature>
<feature type="binding site" evidence="1">
    <location>
        <begin position="21"/>
        <end position="23"/>
    </location>
    <ligand>
        <name>substrate</name>
    </ligand>
</feature>
<feature type="binding site" evidence="1">
    <location>
        <position position="36"/>
    </location>
    <ligand>
        <name>substrate</name>
    </ligand>
</feature>
<feature type="binding site" evidence="1">
    <location>
        <begin position="59"/>
        <end position="62"/>
    </location>
    <ligand>
        <name>substrate</name>
    </ligand>
</feature>
<feature type="binding site" evidence="1">
    <location>
        <position position="119"/>
    </location>
    <ligand>
        <name>substrate</name>
    </ligand>
</feature>
<feature type="binding site" evidence="1">
    <location>
        <position position="156"/>
    </location>
    <ligand>
        <name>substrate</name>
    </ligand>
</feature>
<feature type="binding site" evidence="1">
    <location>
        <position position="206"/>
    </location>
    <ligand>
        <name>ATP</name>
        <dbReference type="ChEBI" id="CHEBI:30616"/>
    </ligand>
</feature>
<feature type="binding site" evidence="1">
    <location>
        <position position="325"/>
    </location>
    <ligand>
        <name>ATP</name>
        <dbReference type="ChEBI" id="CHEBI:30616"/>
    </ligand>
</feature>
<feature type="binding site" evidence="1">
    <location>
        <begin position="352"/>
        <end position="355"/>
    </location>
    <ligand>
        <name>ATP</name>
        <dbReference type="ChEBI" id="CHEBI:30616"/>
    </ligand>
</feature>
<organism>
    <name type="scientific">Macrococcus caseolyticus (strain JCSC5402)</name>
    <name type="common">Macrococcoides caseolyticum</name>
    <dbReference type="NCBI Taxonomy" id="458233"/>
    <lineage>
        <taxon>Bacteria</taxon>
        <taxon>Bacillati</taxon>
        <taxon>Bacillota</taxon>
        <taxon>Bacilli</taxon>
        <taxon>Bacillales</taxon>
        <taxon>Staphylococcaceae</taxon>
        <taxon>Macrococcoides</taxon>
    </lineage>
</organism>
<keyword id="KW-0067">ATP-binding</keyword>
<keyword id="KW-0963">Cytoplasm</keyword>
<keyword id="KW-0324">Glycolysis</keyword>
<keyword id="KW-0418">Kinase</keyword>
<keyword id="KW-0547">Nucleotide-binding</keyword>
<keyword id="KW-1185">Reference proteome</keyword>
<keyword id="KW-0808">Transferase</keyword>
<name>PGK_MACCJ</name>
<dbReference type="EC" id="2.7.2.3" evidence="1"/>
<dbReference type="EMBL" id="AP009484">
    <property type="protein sequence ID" value="BAH17229.1"/>
    <property type="molecule type" value="Genomic_DNA"/>
</dbReference>
<dbReference type="RefSeq" id="WP_012656430.1">
    <property type="nucleotide sequence ID" value="NC_011999.1"/>
</dbReference>
<dbReference type="SMR" id="B9EAG8"/>
<dbReference type="STRING" id="458233.MCCL_0522"/>
<dbReference type="KEGG" id="mcl:MCCL_0522"/>
<dbReference type="eggNOG" id="COG0126">
    <property type="taxonomic scope" value="Bacteria"/>
</dbReference>
<dbReference type="HOGENOM" id="CLU_025427_0_2_9"/>
<dbReference type="OrthoDB" id="9808460at2"/>
<dbReference type="UniPathway" id="UPA00109">
    <property type="reaction ID" value="UER00185"/>
</dbReference>
<dbReference type="Proteomes" id="UP000001383">
    <property type="component" value="Chromosome"/>
</dbReference>
<dbReference type="GO" id="GO:0005829">
    <property type="term" value="C:cytosol"/>
    <property type="evidence" value="ECO:0007669"/>
    <property type="project" value="TreeGrafter"/>
</dbReference>
<dbReference type="GO" id="GO:0043531">
    <property type="term" value="F:ADP binding"/>
    <property type="evidence" value="ECO:0007669"/>
    <property type="project" value="TreeGrafter"/>
</dbReference>
<dbReference type="GO" id="GO:0005524">
    <property type="term" value="F:ATP binding"/>
    <property type="evidence" value="ECO:0007669"/>
    <property type="project" value="UniProtKB-KW"/>
</dbReference>
<dbReference type="GO" id="GO:0004618">
    <property type="term" value="F:phosphoglycerate kinase activity"/>
    <property type="evidence" value="ECO:0007669"/>
    <property type="project" value="UniProtKB-UniRule"/>
</dbReference>
<dbReference type="GO" id="GO:0006094">
    <property type="term" value="P:gluconeogenesis"/>
    <property type="evidence" value="ECO:0007669"/>
    <property type="project" value="TreeGrafter"/>
</dbReference>
<dbReference type="GO" id="GO:0006096">
    <property type="term" value="P:glycolytic process"/>
    <property type="evidence" value="ECO:0007669"/>
    <property type="project" value="UniProtKB-UniRule"/>
</dbReference>
<dbReference type="CDD" id="cd00318">
    <property type="entry name" value="Phosphoglycerate_kinase"/>
    <property type="match status" value="1"/>
</dbReference>
<dbReference type="FunFam" id="3.40.50.1260:FF:000001">
    <property type="entry name" value="Phosphoglycerate kinase"/>
    <property type="match status" value="1"/>
</dbReference>
<dbReference type="FunFam" id="3.40.50.1260:FF:000008">
    <property type="entry name" value="Phosphoglycerate kinase"/>
    <property type="match status" value="1"/>
</dbReference>
<dbReference type="Gene3D" id="3.40.50.1260">
    <property type="entry name" value="Phosphoglycerate kinase, N-terminal domain"/>
    <property type="match status" value="2"/>
</dbReference>
<dbReference type="HAMAP" id="MF_00145">
    <property type="entry name" value="Phosphoglyc_kinase"/>
    <property type="match status" value="1"/>
</dbReference>
<dbReference type="InterPro" id="IPR001576">
    <property type="entry name" value="Phosphoglycerate_kinase"/>
</dbReference>
<dbReference type="InterPro" id="IPR015911">
    <property type="entry name" value="Phosphoglycerate_kinase_CS"/>
</dbReference>
<dbReference type="InterPro" id="IPR015824">
    <property type="entry name" value="Phosphoglycerate_kinase_N"/>
</dbReference>
<dbReference type="InterPro" id="IPR036043">
    <property type="entry name" value="Phosphoglycerate_kinase_sf"/>
</dbReference>
<dbReference type="PANTHER" id="PTHR11406">
    <property type="entry name" value="PHOSPHOGLYCERATE KINASE"/>
    <property type="match status" value="1"/>
</dbReference>
<dbReference type="PANTHER" id="PTHR11406:SF23">
    <property type="entry name" value="PHOSPHOGLYCERATE KINASE 1, CHLOROPLASTIC-RELATED"/>
    <property type="match status" value="1"/>
</dbReference>
<dbReference type="Pfam" id="PF00162">
    <property type="entry name" value="PGK"/>
    <property type="match status" value="1"/>
</dbReference>
<dbReference type="PIRSF" id="PIRSF000724">
    <property type="entry name" value="Pgk"/>
    <property type="match status" value="1"/>
</dbReference>
<dbReference type="PRINTS" id="PR00477">
    <property type="entry name" value="PHGLYCKINASE"/>
</dbReference>
<dbReference type="SUPFAM" id="SSF53748">
    <property type="entry name" value="Phosphoglycerate kinase"/>
    <property type="match status" value="1"/>
</dbReference>
<dbReference type="PROSITE" id="PS00111">
    <property type="entry name" value="PGLYCERATE_KINASE"/>
    <property type="match status" value="1"/>
</dbReference>
<protein>
    <recommendedName>
        <fullName evidence="1">Phosphoglycerate kinase</fullName>
        <ecNumber evidence="1">2.7.2.3</ecNumber>
    </recommendedName>
</protein>